<reference key="1">
    <citation type="journal article" date="2007" name="Genome Biol.">
        <title>Comparison of Francisella tularensis genomes reveals evolutionary events associated with the emergence of human pathogenic strains.</title>
        <authorList>
            <person name="Rohmer L."/>
            <person name="Fong C."/>
            <person name="Abmayr S."/>
            <person name="Wasnick M."/>
            <person name="Larson Freeman T.J."/>
            <person name="Radey M."/>
            <person name="Guina T."/>
            <person name="Svensson K."/>
            <person name="Hayden H.S."/>
            <person name="Jacobs M."/>
            <person name="Gallagher L.A."/>
            <person name="Manoil C."/>
            <person name="Ernst R.K."/>
            <person name="Drees B."/>
            <person name="Buckley D."/>
            <person name="Haugen E."/>
            <person name="Bovee D."/>
            <person name="Zhou Y."/>
            <person name="Chang J."/>
            <person name="Levy R."/>
            <person name="Lim R."/>
            <person name="Gillett W."/>
            <person name="Guenthener D."/>
            <person name="Kang A."/>
            <person name="Shaffer S.A."/>
            <person name="Taylor G."/>
            <person name="Chen J."/>
            <person name="Gallis B."/>
            <person name="D'Argenio D.A."/>
            <person name="Forsman M."/>
            <person name="Olson M.V."/>
            <person name="Goodlett D.R."/>
            <person name="Kaul R."/>
            <person name="Miller S.I."/>
            <person name="Brittnacher M.J."/>
        </authorList>
    </citation>
    <scope>NUCLEOTIDE SEQUENCE [LARGE SCALE GENOMIC DNA]</scope>
    <source>
        <strain>U112</strain>
    </source>
</reference>
<feature type="chain" id="PRO_0000296807" description="DNA-directed RNA polymerase subunit alpha 2">
    <location>
        <begin position="1"/>
        <end position="318"/>
    </location>
</feature>
<feature type="region of interest" description="Alpha N-terminal domain (alpha-NTD)" evidence="1">
    <location>
        <begin position="1"/>
        <end position="227"/>
    </location>
</feature>
<feature type="region of interest" description="Alpha C-terminal domain (alpha-CTD)" evidence="1">
    <location>
        <begin position="242"/>
        <end position="318"/>
    </location>
</feature>
<protein>
    <recommendedName>
        <fullName evidence="1">DNA-directed RNA polymerase subunit alpha 2</fullName>
        <shortName evidence="1">RNAP subunit alpha 2</shortName>
        <ecNumber evidence="1">2.7.7.6</ecNumber>
    </recommendedName>
    <alternativeName>
        <fullName evidence="1">RNA polymerase subunit alpha 2</fullName>
    </alternativeName>
    <alternativeName>
        <fullName evidence="1">Transcriptase subunit alpha 2</fullName>
    </alternativeName>
</protein>
<organism>
    <name type="scientific">Francisella tularensis subsp. novicida (strain U112)</name>
    <dbReference type="NCBI Taxonomy" id="401614"/>
    <lineage>
        <taxon>Bacteria</taxon>
        <taxon>Pseudomonadati</taxon>
        <taxon>Pseudomonadota</taxon>
        <taxon>Gammaproteobacteria</taxon>
        <taxon>Thiotrichales</taxon>
        <taxon>Francisellaceae</taxon>
        <taxon>Francisella</taxon>
    </lineage>
</organism>
<gene>
    <name evidence="1" type="primary">rpoA2</name>
    <name type="ordered locus">FTN_1412</name>
</gene>
<sequence>MALENLLHPTNIKIDEYAKNATKFSFEALERGVGYTLGFALKQTMLYSIAGACVTSIKINDGKVTSLEDVIPCDETVADIILNVKSLPVTLAEGVETGTITFELSGSEEEIFSEEAKLSEGLAITEEVFICSYNGGKKLKIEAKVEKGVGFRPAQDNFKDGEFLLDATFSPVVFCDFEIKDARVGRRTDLDKLELNIKTNGNVNCEEALRLAATKIQNQLRNIVDIEEINKGIFVEDPTKDINPILLKHVEELNLTARSSNCLKAVNIRLIGELVQKTENELLKAPNFGKKSLTEIKDKLSELGLSLGTLIENWPQDL</sequence>
<proteinExistence type="inferred from homology"/>
<name>RPOA2_FRATN</name>
<evidence type="ECO:0000255" key="1">
    <source>
        <dbReference type="HAMAP-Rule" id="MF_00059"/>
    </source>
</evidence>
<comment type="function">
    <text evidence="1">DNA-dependent RNA polymerase catalyzes the transcription of DNA into RNA using the four ribonucleoside triphosphates as substrates.</text>
</comment>
<comment type="catalytic activity">
    <reaction evidence="1">
        <text>RNA(n) + a ribonucleoside 5'-triphosphate = RNA(n+1) + diphosphate</text>
        <dbReference type="Rhea" id="RHEA:21248"/>
        <dbReference type="Rhea" id="RHEA-COMP:14527"/>
        <dbReference type="Rhea" id="RHEA-COMP:17342"/>
        <dbReference type="ChEBI" id="CHEBI:33019"/>
        <dbReference type="ChEBI" id="CHEBI:61557"/>
        <dbReference type="ChEBI" id="CHEBI:140395"/>
        <dbReference type="EC" id="2.7.7.6"/>
    </reaction>
</comment>
<comment type="subunit">
    <text evidence="1">Homodimer. The RNAP catalytic core consists of 2 alpha, 1 beta, 1 beta' and 1 omega subunit. When a sigma factor is associated with the core the holoenzyme is formed, which can initiate transcription.</text>
</comment>
<comment type="domain">
    <text evidence="1">The N-terminal domain is essential for RNAP assembly and basal transcription, whereas the C-terminal domain is involved in interaction with transcriptional regulators and with upstream promoter elements.</text>
</comment>
<comment type="similarity">
    <text evidence="1">Belongs to the RNA polymerase alpha chain family.</text>
</comment>
<accession>A0Q7R6</accession>
<dbReference type="EC" id="2.7.7.6" evidence="1"/>
<dbReference type="EMBL" id="CP000439">
    <property type="protein sequence ID" value="ABK90281.1"/>
    <property type="molecule type" value="Genomic_DNA"/>
</dbReference>
<dbReference type="RefSeq" id="WP_003025265.1">
    <property type="nucleotide sequence ID" value="NZ_CP009633.1"/>
</dbReference>
<dbReference type="SMR" id="A0Q7R6"/>
<dbReference type="KEGG" id="ftn:FTN_1412"/>
<dbReference type="KEGG" id="ftx:AW25_590"/>
<dbReference type="BioCyc" id="FTUL401614:G1G75-1459-MONOMER"/>
<dbReference type="Proteomes" id="UP000000762">
    <property type="component" value="Chromosome"/>
</dbReference>
<dbReference type="GO" id="GO:0005737">
    <property type="term" value="C:cytoplasm"/>
    <property type="evidence" value="ECO:0007669"/>
    <property type="project" value="UniProtKB-ARBA"/>
</dbReference>
<dbReference type="GO" id="GO:0000428">
    <property type="term" value="C:DNA-directed RNA polymerase complex"/>
    <property type="evidence" value="ECO:0007669"/>
    <property type="project" value="UniProtKB-KW"/>
</dbReference>
<dbReference type="GO" id="GO:0003677">
    <property type="term" value="F:DNA binding"/>
    <property type="evidence" value="ECO:0007669"/>
    <property type="project" value="UniProtKB-UniRule"/>
</dbReference>
<dbReference type="GO" id="GO:0003899">
    <property type="term" value="F:DNA-directed RNA polymerase activity"/>
    <property type="evidence" value="ECO:0007669"/>
    <property type="project" value="UniProtKB-UniRule"/>
</dbReference>
<dbReference type="GO" id="GO:0046983">
    <property type="term" value="F:protein dimerization activity"/>
    <property type="evidence" value="ECO:0007669"/>
    <property type="project" value="InterPro"/>
</dbReference>
<dbReference type="GO" id="GO:0006351">
    <property type="term" value="P:DNA-templated transcription"/>
    <property type="evidence" value="ECO:0007669"/>
    <property type="project" value="UniProtKB-UniRule"/>
</dbReference>
<dbReference type="FunFam" id="1.10.150.20:FF:000001">
    <property type="entry name" value="DNA-directed RNA polymerase subunit alpha"/>
    <property type="match status" value="1"/>
</dbReference>
<dbReference type="Gene3D" id="1.10.150.20">
    <property type="entry name" value="5' to 3' exonuclease, C-terminal subdomain"/>
    <property type="match status" value="1"/>
</dbReference>
<dbReference type="Gene3D" id="2.170.120.12">
    <property type="entry name" value="DNA-directed RNA polymerase, insert domain"/>
    <property type="match status" value="1"/>
</dbReference>
<dbReference type="Gene3D" id="3.30.1360.10">
    <property type="entry name" value="RNA polymerase, RBP11-like subunit"/>
    <property type="match status" value="1"/>
</dbReference>
<dbReference type="HAMAP" id="MF_00059">
    <property type="entry name" value="RNApol_bact_RpoA"/>
    <property type="match status" value="1"/>
</dbReference>
<dbReference type="InterPro" id="IPR011262">
    <property type="entry name" value="DNA-dir_RNA_pol_insert"/>
</dbReference>
<dbReference type="InterPro" id="IPR011263">
    <property type="entry name" value="DNA-dir_RNA_pol_RpoA/D/Rpb3"/>
</dbReference>
<dbReference type="InterPro" id="IPR011773">
    <property type="entry name" value="DNA-dir_RpoA"/>
</dbReference>
<dbReference type="InterPro" id="IPR036603">
    <property type="entry name" value="RBP11-like"/>
</dbReference>
<dbReference type="InterPro" id="IPR011260">
    <property type="entry name" value="RNAP_asu_C"/>
</dbReference>
<dbReference type="InterPro" id="IPR036643">
    <property type="entry name" value="RNApol_insert_sf"/>
</dbReference>
<dbReference type="NCBIfam" id="NF003513">
    <property type="entry name" value="PRK05182.1-2"/>
    <property type="match status" value="1"/>
</dbReference>
<dbReference type="NCBIfam" id="TIGR02027">
    <property type="entry name" value="rpoA"/>
    <property type="match status" value="1"/>
</dbReference>
<dbReference type="Pfam" id="PF01000">
    <property type="entry name" value="RNA_pol_A_bac"/>
    <property type="match status" value="1"/>
</dbReference>
<dbReference type="Pfam" id="PF03118">
    <property type="entry name" value="RNA_pol_A_CTD"/>
    <property type="match status" value="1"/>
</dbReference>
<dbReference type="Pfam" id="PF01193">
    <property type="entry name" value="RNA_pol_L"/>
    <property type="match status" value="1"/>
</dbReference>
<dbReference type="SMART" id="SM00662">
    <property type="entry name" value="RPOLD"/>
    <property type="match status" value="1"/>
</dbReference>
<dbReference type="SUPFAM" id="SSF47789">
    <property type="entry name" value="C-terminal domain of RNA polymerase alpha subunit"/>
    <property type="match status" value="1"/>
</dbReference>
<dbReference type="SUPFAM" id="SSF56553">
    <property type="entry name" value="Insert subdomain of RNA polymerase alpha subunit"/>
    <property type="match status" value="1"/>
</dbReference>
<dbReference type="SUPFAM" id="SSF55257">
    <property type="entry name" value="RBP11-like subunits of RNA polymerase"/>
    <property type="match status" value="1"/>
</dbReference>
<keyword id="KW-0240">DNA-directed RNA polymerase</keyword>
<keyword id="KW-0548">Nucleotidyltransferase</keyword>
<keyword id="KW-0804">Transcription</keyword>
<keyword id="KW-0808">Transferase</keyword>